<accession>P10644</accession>
<accession>K7ER48</accession>
<accession>Q567S7</accession>
<reference key="1">
    <citation type="journal article" date="1987" name="Biochem. Biophys. Res. Commun.">
        <title>Molecular cloning, cDNA structure and deduced amino acid sequence for a type I regulatory subunit of cAMP-dependent protein kinase from human testis.</title>
        <authorList>
            <person name="Sandberg M."/>
            <person name="Tasken K."/>
            <person name="Oeyen O."/>
            <person name="Hansson V."/>
            <person name="Jahnsen T."/>
        </authorList>
    </citation>
    <scope>NUCLEOTIDE SEQUENCE [MRNA] (ISOFORM 1)</scope>
    <source>
        <tissue>Testis</tissue>
    </source>
</reference>
<reference key="2">
    <citation type="journal article" date="1990" name="Biochem. Biophys. Res. Commun.">
        <title>The two mRNA forms for the type I alpha regulatory subunit of cAMP-dependent protein kinase from human testis are due to the use of different polyadenylation site signals.</title>
        <authorList>
            <person name="Sandberg M."/>
            <person name="Skalhegg B."/>
            <person name="Jahnsen T."/>
        </authorList>
    </citation>
    <scope>NUCLEOTIDE SEQUENCE [MRNA] (ISOFORM 1)</scope>
    <source>
        <tissue>Testis</tissue>
    </source>
</reference>
<reference key="3">
    <citation type="journal article" date="1991" name="Cell">
        <title>Subtractive hybridization cloning of a tissue-specific extinguisher: TSE1 encodes a regulatory subunit of protein kinase A.</title>
        <authorList>
            <person name="Jones K.W."/>
            <person name="Shapero M.H."/>
            <person name="Chevrette M."/>
            <person name="Fournier R.E."/>
        </authorList>
    </citation>
    <scope>NUCLEOTIDE SEQUENCE [MRNA] (ISOFORM 1)</scope>
</reference>
<reference key="4">
    <citation type="journal article" date="1997" name="Endocrinology">
        <title>The human gene for the regulatory subunit RI alpha of cyclic adenosine 3', 5'-monophosphate-dependent protein kinase: two distinct promoters provide differential regulation of alternately spliced messenger ribonucleic acids.</title>
        <authorList>
            <person name="Solberg R."/>
            <person name="Sandberg M."/>
            <person name="Natarajan V."/>
            <person name="Torjesen P.A."/>
            <person name="Hansson V."/>
            <person name="Jahnsen T."/>
            <person name="Tasken K."/>
        </authorList>
    </citation>
    <scope>NUCLEOTIDE SEQUENCE [MRNA] (ISOFORM 1)</scope>
    <source>
        <tissue>Testis</tissue>
    </source>
</reference>
<reference key="5">
    <citation type="journal article" date="2006" name="Nature">
        <title>DNA sequence of human chromosome 17 and analysis of rearrangement in the human lineage.</title>
        <authorList>
            <person name="Zody M.C."/>
            <person name="Garber M."/>
            <person name="Adams D.J."/>
            <person name="Sharpe T."/>
            <person name="Harrow J."/>
            <person name="Lupski J.R."/>
            <person name="Nicholson C."/>
            <person name="Searle S.M."/>
            <person name="Wilming L."/>
            <person name="Young S.K."/>
            <person name="Abouelleil A."/>
            <person name="Allen N.R."/>
            <person name="Bi W."/>
            <person name="Bloom T."/>
            <person name="Borowsky M.L."/>
            <person name="Bugalter B.E."/>
            <person name="Butler J."/>
            <person name="Chang J.L."/>
            <person name="Chen C.-K."/>
            <person name="Cook A."/>
            <person name="Corum B."/>
            <person name="Cuomo C.A."/>
            <person name="de Jong P.J."/>
            <person name="DeCaprio D."/>
            <person name="Dewar K."/>
            <person name="FitzGerald M."/>
            <person name="Gilbert J."/>
            <person name="Gibson R."/>
            <person name="Gnerre S."/>
            <person name="Goldstein S."/>
            <person name="Grafham D.V."/>
            <person name="Grocock R."/>
            <person name="Hafez N."/>
            <person name="Hagopian D.S."/>
            <person name="Hart E."/>
            <person name="Norman C.H."/>
            <person name="Humphray S."/>
            <person name="Jaffe D.B."/>
            <person name="Jones M."/>
            <person name="Kamal M."/>
            <person name="Khodiyar V.K."/>
            <person name="LaButti K."/>
            <person name="Laird G."/>
            <person name="Lehoczky J."/>
            <person name="Liu X."/>
            <person name="Lokyitsang T."/>
            <person name="Loveland J."/>
            <person name="Lui A."/>
            <person name="Macdonald P."/>
            <person name="Major J.E."/>
            <person name="Matthews L."/>
            <person name="Mauceli E."/>
            <person name="McCarroll S.A."/>
            <person name="Mihalev A.H."/>
            <person name="Mudge J."/>
            <person name="Nguyen C."/>
            <person name="Nicol R."/>
            <person name="O'Leary S.B."/>
            <person name="Osoegawa K."/>
            <person name="Schwartz D.C."/>
            <person name="Shaw-Smith C."/>
            <person name="Stankiewicz P."/>
            <person name="Steward C."/>
            <person name="Swarbreck D."/>
            <person name="Venkataraman V."/>
            <person name="Whittaker C.A."/>
            <person name="Yang X."/>
            <person name="Zimmer A.R."/>
            <person name="Bradley A."/>
            <person name="Hubbard T."/>
            <person name="Birren B.W."/>
            <person name="Rogers J."/>
            <person name="Lander E.S."/>
            <person name="Nusbaum C."/>
        </authorList>
    </citation>
    <scope>NUCLEOTIDE SEQUENCE [LARGE SCALE GENOMIC DNA]</scope>
</reference>
<reference key="6">
    <citation type="journal article" date="2004" name="Genome Res.">
        <title>The status, quality, and expansion of the NIH full-length cDNA project: the Mammalian Gene Collection (MGC).</title>
        <authorList>
            <consortium name="The MGC Project Team"/>
        </authorList>
    </citation>
    <scope>NUCLEOTIDE SEQUENCE [LARGE SCALE MRNA] (ISOFORM 1)</scope>
    <source>
        <tissue>Lymph</tissue>
        <tissue>Uterus</tissue>
    </source>
</reference>
<reference key="7">
    <citation type="journal article" date="2003" name="Nat. Biotechnol.">
        <title>Exploring proteomes and analyzing protein processing by mass spectrometric identification of sorted N-terminal peptides.</title>
        <authorList>
            <person name="Gevaert K."/>
            <person name="Goethals M."/>
            <person name="Martens L."/>
            <person name="Van Damme J."/>
            <person name="Staes A."/>
            <person name="Thomas G.R."/>
            <person name="Vandekerckhove J."/>
        </authorList>
    </citation>
    <scope>PROTEIN SEQUENCE OF 1-13</scope>
    <scope>ACETYLATION AT MET-1</scope>
    <source>
        <tissue>Platelet</tissue>
    </source>
</reference>
<reference key="8">
    <citation type="journal article" date="2002" name="J. Clin. Endocrinol. Metab.">
        <title>Mutations of the PRKAR1A gene in Cushing's syndrome due to sporadic primary pigmented nodular adrenocortical disease.</title>
        <authorList>
            <person name="Groussin L."/>
            <person name="Jullian E."/>
            <person name="Perlemoine K."/>
            <person name="Louvel A."/>
            <person name="Leheup B."/>
            <person name="Luton J.P."/>
            <person name="Bertagna X."/>
            <person name="Bertherat J."/>
        </authorList>
    </citation>
    <scope>INVOLVEMENT IN PPNAD1</scope>
</reference>
<reference key="9">
    <citation type="journal article" date="2003" name="Nature">
        <title>Proteomic characterization of the human centrosome by protein correlation profiling.</title>
        <authorList>
            <person name="Andersen J.S."/>
            <person name="Wilkinson C.J."/>
            <person name="Mayor T."/>
            <person name="Mortensen P."/>
            <person name="Nigg E.A."/>
            <person name="Mann M."/>
        </authorList>
    </citation>
    <scope>IDENTIFICATION BY MASS SPECTROMETRY</scope>
    <source>
        <tissue>Lymphoblast</tissue>
    </source>
</reference>
<reference key="10">
    <citation type="journal article" date="2005" name="Cell Cycle">
        <title>The second subunit of the replication factor C complex (RFC40) and the regulatory subunit (RIalpha) of protein kinase A form a protein complex promoting cell survival.</title>
        <authorList>
            <person name="Gupte R.S."/>
            <person name="Weng Y."/>
            <person name="Liu L."/>
            <person name="Lee M.Y."/>
        </authorList>
    </citation>
    <scope>INTERACTION WITH RFC2</scope>
</reference>
<reference key="11">
    <citation type="journal article" date="2006" name="Cell">
        <title>Global, in vivo, and site-specific phosphorylation dynamics in signaling networks.</title>
        <authorList>
            <person name="Olsen J.V."/>
            <person name="Blagoev B."/>
            <person name="Gnad F."/>
            <person name="Macek B."/>
            <person name="Kumar C."/>
            <person name="Mortensen P."/>
            <person name="Mann M."/>
        </authorList>
    </citation>
    <scope>PHOSPHORYLATION [LARGE SCALE ANALYSIS] AT SER-83</scope>
    <scope>IDENTIFICATION BY MASS SPECTROMETRY [LARGE SCALE ANALYSIS]</scope>
    <source>
        <tissue>Cervix carcinoma</tissue>
    </source>
</reference>
<reference key="12">
    <citation type="journal article" date="2006" name="Oncogene">
        <title>Smad6 is a protein kinase X phosphorylation substrate and is required for HL-60 cell differentiation.</title>
        <authorList>
            <person name="Glesne D."/>
            <person name="Huberman E."/>
        </authorList>
    </citation>
    <scope>FUNCTION</scope>
    <scope>INTERACTION WITH PRKX</scope>
</reference>
<reference key="13">
    <citation type="journal article" date="2006" name="Proc. Natl. Acad. Sci. U.S.A.">
        <title>PKA-mediated phosphorylation regulates the function of activation-induced deaminase (AID) in B cells.</title>
        <authorList>
            <person name="Pasqualucci L."/>
            <person name="Kitaura Y."/>
            <person name="Gu H."/>
            <person name="Dalla-Favera R."/>
        </authorList>
    </citation>
    <scope>INTERACTION WITH AICDA</scope>
</reference>
<reference key="14">
    <citation type="journal article" date="2008" name="J. Proteome Res.">
        <title>Phosphorylation analysis of primary human T lymphocytes using sequential IMAC and titanium oxide enrichment.</title>
        <authorList>
            <person name="Carrascal M."/>
            <person name="Ovelleiro D."/>
            <person name="Casas V."/>
            <person name="Gay M."/>
            <person name="Abian J."/>
        </authorList>
    </citation>
    <scope>PHOSPHORYLATION [LARGE SCALE ANALYSIS] AT SER-83</scope>
    <scope>IDENTIFICATION BY MASS SPECTROMETRY [LARGE SCALE ANALYSIS]</scope>
    <source>
        <tissue>T-cell</tissue>
    </source>
</reference>
<reference key="15">
    <citation type="journal article" date="2008" name="J. Proteome Res.">
        <title>Phosphoproteome of resting human platelets.</title>
        <authorList>
            <person name="Zahedi R.P."/>
            <person name="Lewandrowski U."/>
            <person name="Wiesner J."/>
            <person name="Wortelkamp S."/>
            <person name="Moebius J."/>
            <person name="Schuetz C."/>
            <person name="Walter U."/>
            <person name="Gambaryan S."/>
            <person name="Sickmann A."/>
        </authorList>
    </citation>
    <scope>IDENTIFICATION BY MASS SPECTROMETRY [LARGE SCALE ANALYSIS]</scope>
    <source>
        <tissue>Platelet</tissue>
    </source>
</reference>
<reference key="16">
    <citation type="journal article" date="2008" name="Mol. Cell">
        <title>Kinase-selective enrichment enables quantitative phosphoproteomics of the kinome across the cell cycle.</title>
        <authorList>
            <person name="Daub H."/>
            <person name="Olsen J.V."/>
            <person name="Bairlein M."/>
            <person name="Gnad F."/>
            <person name="Oppermann F.S."/>
            <person name="Korner R."/>
            <person name="Greff Z."/>
            <person name="Keri G."/>
            <person name="Stemmann O."/>
            <person name="Mann M."/>
        </authorList>
    </citation>
    <scope>PHOSPHORYLATION [LARGE SCALE ANALYSIS] AT SER-83</scope>
    <scope>IDENTIFICATION BY MASS SPECTROMETRY [LARGE SCALE ANALYSIS]</scope>
    <source>
        <tissue>Cervix carcinoma</tissue>
    </source>
</reference>
<reference key="17">
    <citation type="journal article" date="2008" name="Proc. Natl. Acad. Sci. U.S.A.">
        <title>A quantitative atlas of mitotic phosphorylation.</title>
        <authorList>
            <person name="Dephoure N."/>
            <person name="Zhou C."/>
            <person name="Villen J."/>
            <person name="Beausoleil S.A."/>
            <person name="Bakalarski C.E."/>
            <person name="Elledge S.J."/>
            <person name="Gygi S.P."/>
        </authorList>
    </citation>
    <scope>IDENTIFICATION BY MASS SPECTROMETRY [LARGE SCALE ANALYSIS]</scope>
    <source>
        <tissue>Cervix carcinoma</tissue>
    </source>
</reference>
<reference key="18">
    <citation type="journal article" date="2008" name="Proteomics">
        <title>Large-scale phosphoproteome analysis of human liver tissue by enrichment and fractionation of phosphopeptides with strong anion exchange chromatography.</title>
        <authorList>
            <person name="Han G."/>
            <person name="Ye M."/>
            <person name="Zhou H."/>
            <person name="Jiang X."/>
            <person name="Feng S."/>
            <person name="Jiang X."/>
            <person name="Tian R."/>
            <person name="Wan D."/>
            <person name="Zou H."/>
            <person name="Gu J."/>
        </authorList>
    </citation>
    <scope>PHOSPHORYLATION [LARGE SCALE ANALYSIS] AT SER-83</scope>
    <scope>IDENTIFICATION BY MASS SPECTROMETRY [LARGE SCALE ANALYSIS]</scope>
    <source>
        <tissue>Liver</tissue>
    </source>
</reference>
<reference key="19">
    <citation type="journal article" date="2009" name="Anal. Chem.">
        <title>Lys-N and trypsin cover complementary parts of the phosphoproteome in a refined SCX-based approach.</title>
        <authorList>
            <person name="Gauci S."/>
            <person name="Helbig A.O."/>
            <person name="Slijper M."/>
            <person name="Krijgsveld J."/>
            <person name="Heck A.J."/>
            <person name="Mohammed S."/>
        </authorList>
    </citation>
    <scope>ACETYLATION [LARGE SCALE ANALYSIS] AT MET-1</scope>
    <scope>IDENTIFICATION BY MASS SPECTROMETRY [LARGE SCALE ANALYSIS]</scope>
</reference>
<reference key="20">
    <citation type="journal article" date="2009" name="Mol. Cell. Proteomics">
        <title>Large-scale proteomics analysis of the human kinome.</title>
        <authorList>
            <person name="Oppermann F.S."/>
            <person name="Gnad F."/>
            <person name="Olsen J.V."/>
            <person name="Hornberger R."/>
            <person name="Greff Z."/>
            <person name="Keri G."/>
            <person name="Mann M."/>
            <person name="Daub H."/>
        </authorList>
    </citation>
    <scope>PHOSPHORYLATION [LARGE SCALE ANALYSIS] AT SER-83</scope>
    <scope>IDENTIFICATION BY MASS SPECTROMETRY [LARGE SCALE ANALYSIS]</scope>
</reference>
<reference key="21">
    <citation type="journal article" date="2009" name="Sci. Signal.">
        <title>Quantitative phosphoproteomic analysis of T cell receptor signaling reveals system-wide modulation of protein-protein interactions.</title>
        <authorList>
            <person name="Mayya V."/>
            <person name="Lundgren D.H."/>
            <person name="Hwang S.-I."/>
            <person name="Rezaul K."/>
            <person name="Wu L."/>
            <person name="Eng J.K."/>
            <person name="Rodionov V."/>
            <person name="Han D.K."/>
        </authorList>
    </citation>
    <scope>PHOSPHORYLATION [LARGE SCALE ANALYSIS] AT SER-83</scope>
    <scope>IDENTIFICATION BY MASS SPECTROMETRY [LARGE SCALE ANALYSIS]</scope>
    <source>
        <tissue>Leukemic T-cell</tissue>
    </source>
</reference>
<reference key="22">
    <citation type="journal article" date="2010" name="Endocrinology">
        <title>Activity of retinoic acid receptor-alpha is directly regulated at its protein kinase A sites in response to follicle-stimulating hormone signaling.</title>
        <authorList>
            <person name="Santos N.C."/>
            <person name="Kim K.H."/>
        </authorList>
    </citation>
    <scope>INTERACTION WITH RARA</scope>
    <scope>FUNCTION</scope>
</reference>
<reference key="23">
    <citation type="journal article" date="2010" name="J. Biol. Chem.">
        <title>Mys protein regulates protein kinase A activity by interacting with regulatory type Ialpha subunit during vertebrate development.</title>
        <authorList>
            <person name="Kotani T."/>
            <person name="Iemura S."/>
            <person name="Natsume T."/>
            <person name="Kawakami K."/>
            <person name="Yamashita M."/>
        </authorList>
    </citation>
    <scope>INTERACTION WITH PRRC1</scope>
</reference>
<reference key="24">
    <citation type="journal article" date="2010" name="Sci. Signal.">
        <title>Quantitative phosphoproteomics reveals widespread full phosphorylation site occupancy during mitosis.</title>
        <authorList>
            <person name="Olsen J.V."/>
            <person name="Vermeulen M."/>
            <person name="Santamaria A."/>
            <person name="Kumar C."/>
            <person name="Miller M.L."/>
            <person name="Jensen L.J."/>
            <person name="Gnad F."/>
            <person name="Cox J."/>
            <person name="Jensen T.S."/>
            <person name="Nigg E.A."/>
            <person name="Brunak S."/>
            <person name="Mann M."/>
        </authorList>
    </citation>
    <scope>PHOSPHORYLATION [LARGE SCALE ANALYSIS] AT SER-83</scope>
    <scope>IDENTIFICATION BY MASS SPECTROMETRY [LARGE SCALE ANALYSIS]</scope>
    <source>
        <tissue>Cervix carcinoma</tissue>
    </source>
</reference>
<reference key="25">
    <citation type="journal article" date="2011" name="BMC Syst. Biol.">
        <title>Initial characterization of the human central proteome.</title>
        <authorList>
            <person name="Burkard T.R."/>
            <person name="Planyavsky M."/>
            <person name="Kaupe I."/>
            <person name="Breitwieser F.P."/>
            <person name="Buerckstuemmer T."/>
            <person name="Bennett K.L."/>
            <person name="Superti-Furga G."/>
            <person name="Colinge J."/>
        </authorList>
    </citation>
    <scope>IDENTIFICATION BY MASS SPECTROMETRY [LARGE SCALE ANALYSIS]</scope>
</reference>
<reference key="26">
    <citation type="journal article" date="2011" name="N. Engl. J. Med.">
        <title>Recurrent PRKAR1A mutation in acrodysostosis with hormone resistance.</title>
        <authorList>
            <person name="Linglart A."/>
            <person name="Menguy C."/>
            <person name="Couvineau A."/>
            <person name="Auzan C."/>
            <person name="Gunes Y."/>
            <person name="Cancel M."/>
            <person name="Motte E."/>
            <person name="Pinto G."/>
            <person name="Chanson P."/>
            <person name="Bougneres P."/>
            <person name="Clauser E."/>
            <person name="Silve C."/>
        </authorList>
    </citation>
    <scope>INVOLVEMENT IN ACRDYS1</scope>
    <scope>MUTAGENESIS OF TYR-373</scope>
</reference>
<reference key="27">
    <citation type="journal article" date="2011" name="Nat. Cell Biol.">
        <title>Control of PKA stability and signalling by the RING ligase praja2.</title>
        <authorList>
            <person name="Lignitto L."/>
            <person name="Carlucci A."/>
            <person name="Sepe M."/>
            <person name="Stefan E."/>
            <person name="Cuomo O."/>
            <person name="Nistico R."/>
            <person name="Scorziello A."/>
            <person name="Savoia C."/>
            <person name="Garbi C."/>
            <person name="Annunziato L."/>
            <person name="Feliciello A."/>
        </authorList>
    </citation>
    <scope>INTERACTION WITH PJA2</scope>
</reference>
<reference key="28">
    <citation type="journal article" date="2011" name="Sci. Signal.">
        <title>System-wide temporal characterization of the proteome and phosphoproteome of human embryonic stem cell differentiation.</title>
        <authorList>
            <person name="Rigbolt K.T."/>
            <person name="Prokhorova T.A."/>
            <person name="Akimov V."/>
            <person name="Henningsen J."/>
            <person name="Johansen P.T."/>
            <person name="Kratchmarova I."/>
            <person name="Kassem M."/>
            <person name="Mann M."/>
            <person name="Olsen J.V."/>
            <person name="Blagoev B."/>
        </authorList>
    </citation>
    <scope>PHOSPHORYLATION [LARGE SCALE ANALYSIS] AT SER-83</scope>
    <scope>IDENTIFICATION BY MASS SPECTROMETRY [LARGE SCALE ANALYSIS]</scope>
</reference>
<reference key="29">
    <citation type="journal article" date="2012" name="Endocr. J.">
        <title>An unusual presentation of Carney complex with diffuse primary pigmented nodular adrenocortical disease on one adrenal gland and a nonpigmented adrenocortical adenoma and focal primary pigmented nodular adrenocortical disease on the other.</title>
        <authorList>
            <person name="Tung S.C."/>
            <person name="Hwang D.Y."/>
            <person name="Yang J.W."/>
            <person name="Chen W.J."/>
            <person name="Lee C.T."/>
        </authorList>
    </citation>
    <scope>INVOLVEMENT IN CNC1</scope>
</reference>
<reference key="30">
    <citation type="journal article" date="2012" name="J. Biol. Chem.">
        <title>A small novel A-kinase anchoring protein (AKAP) that localizes specifically protein kinase A-regulatory subunit I (PKA-RI) to the plasma membrane.</title>
        <authorList>
            <person name="Burgers P.P."/>
            <person name="Ma Y."/>
            <person name="Margarucci L."/>
            <person name="Mackey M."/>
            <person name="van der Heyden M.A."/>
            <person name="Ellisman M."/>
            <person name="Scholten A."/>
            <person name="Taylor S.S."/>
            <person name="Heck A.J."/>
        </authorList>
    </citation>
    <scope>INTERACTION WITH C2ORF88/SMAKAP</scope>
    <scope>SUBCELLULAR LOCATION</scope>
</reference>
<reference key="31">
    <citation type="journal article" date="2012" name="Korean J. Pathol.">
        <title>Novel Mutation in PRKAR1A in Carney Complex.</title>
        <authorList>
            <person name="Park K.U."/>
            <person name="Kim H.S."/>
            <person name="Lee S.K."/>
            <person name="Jung W.W."/>
            <person name="Park Y.K."/>
        </authorList>
    </citation>
    <scope>INVOLVEMENT IN CNC1</scope>
</reference>
<reference key="32">
    <citation type="journal article" date="2012" name="Mol. Cell. Proteomics">
        <title>Comparative large-scale characterisation of plant vs. mammal proteins reveals similar and idiosyncratic N-alpha acetylation features.</title>
        <authorList>
            <person name="Bienvenut W.V."/>
            <person name="Sumpton D."/>
            <person name="Martinez A."/>
            <person name="Lilla S."/>
            <person name="Espagne C."/>
            <person name="Meinnel T."/>
            <person name="Giglione C."/>
        </authorList>
    </citation>
    <scope>ACETYLATION [LARGE SCALE ANALYSIS] AT MET-1</scope>
    <scope>IDENTIFICATION BY MASS SPECTROMETRY [LARGE SCALE ANALYSIS]</scope>
</reference>
<reference key="33">
    <citation type="journal article" date="2012" name="Proc. Natl. Acad. Sci. U.S.A.">
        <title>N-terminal acetylome analyses and functional insights of the N-terminal acetyltransferase NatB.</title>
        <authorList>
            <person name="Van Damme P."/>
            <person name="Lasa M."/>
            <person name="Polevoda B."/>
            <person name="Gazquez C."/>
            <person name="Elosegui-Artola A."/>
            <person name="Kim D.S."/>
            <person name="De Juan-Pardo E."/>
            <person name="Demeyer K."/>
            <person name="Hole K."/>
            <person name="Larrea E."/>
            <person name="Timmerman E."/>
            <person name="Prieto J."/>
            <person name="Arnesen T."/>
            <person name="Sherman F."/>
            <person name="Gevaert K."/>
            <person name="Aldabe R."/>
        </authorList>
    </citation>
    <scope>ACETYLATION [LARGE SCALE ANALYSIS] AT MET-1</scope>
    <scope>IDENTIFICATION BY MASS SPECTROMETRY [LARGE SCALE ANALYSIS]</scope>
</reference>
<reference key="34">
    <citation type="journal article" date="2013" name="J. Proteome Res.">
        <title>Toward a comprehensive characterization of a human cancer cell phosphoproteome.</title>
        <authorList>
            <person name="Zhou H."/>
            <person name="Di Palma S."/>
            <person name="Preisinger C."/>
            <person name="Peng M."/>
            <person name="Polat A.N."/>
            <person name="Heck A.J."/>
            <person name="Mohammed S."/>
        </authorList>
    </citation>
    <scope>PHOSPHORYLATION [LARGE SCALE ANALYSIS] AT SER-83</scope>
    <scope>IDENTIFICATION BY MASS SPECTROMETRY [LARGE SCALE ANALYSIS]</scope>
    <source>
        <tissue>Cervix carcinoma</tissue>
        <tissue>Erythroleukemia</tissue>
    </source>
</reference>
<reference key="35">
    <citation type="journal article" date="2014" name="J. Proteomics">
        <title>An enzyme assisted RP-RPLC approach for in-depth analysis of human liver phosphoproteome.</title>
        <authorList>
            <person name="Bian Y."/>
            <person name="Song C."/>
            <person name="Cheng K."/>
            <person name="Dong M."/>
            <person name="Wang F."/>
            <person name="Huang J."/>
            <person name="Sun D."/>
            <person name="Wang L."/>
            <person name="Ye M."/>
            <person name="Zou H."/>
        </authorList>
    </citation>
    <scope>PHOSPHORYLATION [LARGE SCALE ANALYSIS] AT THR-75; SER-77 AND SER-83</scope>
    <scope>IDENTIFICATION BY MASS SPECTROMETRY [LARGE SCALE ANALYSIS]</scope>
    <source>
        <tissue>Liver</tissue>
    </source>
</reference>
<reference key="36">
    <citation type="journal article" date="2020" name="Am. J. Hum. Genet.">
        <title>Germline and Mosaic Variants in PRKACA and PRKACB Cause a Multiple Congenital Malformation Syndrome.</title>
        <authorList>
            <person name="Palencia-Campos A."/>
            <person name="Aoto P.C."/>
            <person name="Machal E.M.F."/>
            <person name="Rivera-Barahona A."/>
            <person name="Soto-Bielicka P."/>
            <person name="Bertinetti D."/>
            <person name="Baker B."/>
            <person name="Vu L."/>
            <person name="Piceci-Sparascio F."/>
            <person name="Torrente I."/>
            <person name="Boudin E."/>
            <person name="Peeters S."/>
            <person name="Van Hul W."/>
            <person name="Huber C."/>
            <person name="Bonneau D."/>
            <person name="Hildebrand M.S."/>
            <person name="Coleman M."/>
            <person name="Bahlo M."/>
            <person name="Bennett M.F."/>
            <person name="Schneider A.L."/>
            <person name="Scheffer I.E."/>
            <person name="Kibaek M."/>
            <person name="Kristiansen B.S."/>
            <person name="Issa M.Y."/>
            <person name="Mehrez M.I."/>
            <person name="Ismail S."/>
            <person name="Tenorio J."/>
            <person name="Li G."/>
            <person name="Skaalhegg B.S."/>
            <person name="Otaify G.A."/>
            <person name="Temtamy S."/>
            <person name="Aglan M."/>
            <person name="Joench A.E."/>
            <person name="De Luca A."/>
            <person name="Mortier G."/>
            <person name="Cormier-Daire V."/>
            <person name="Ziegler A."/>
            <person name="Wallis M."/>
            <person name="Lapunzina P."/>
            <person name="Herberg F.W."/>
            <person name="Taylor S.S."/>
            <person name="Ruiz-Perez V.L."/>
        </authorList>
    </citation>
    <scope>INTERACTION WITH PRKACA AND PRKACB</scope>
</reference>
<reference key="37">
    <citation type="journal article" date="2004" name="Proc. Natl. Acad. Sci. U.S.A.">
        <title>Comparative PRKAR1A genotype-phenotype analyses in humans with Carney complex and prkar1a haploinsufficient mice.</title>
        <authorList>
            <person name="Veugelers M."/>
            <person name="Wilkes D."/>
            <person name="Burton K."/>
            <person name="McDermott D.A."/>
            <person name="Song Y."/>
            <person name="Goldstein M.M."/>
            <person name="La Perle K."/>
            <person name="Vaughan C.J."/>
            <person name="O'Hagan A."/>
            <person name="Bennett K.R."/>
            <person name="Meyer B.J."/>
            <person name="Legius E."/>
            <person name="Karttunen M."/>
            <person name="Norio R."/>
            <person name="Kaariainen H."/>
            <person name="Lavyne M."/>
            <person name="Neau J.-P."/>
            <person name="Richter G."/>
            <person name="Kirali K."/>
            <person name="Farnsworth A."/>
            <person name="Stapleton K."/>
            <person name="Morelli P."/>
            <person name="Takanashi Y."/>
            <person name="Bamforth J.-S."/>
            <person name="Eitelberger F."/>
            <person name="Noszian I."/>
            <person name="Manfroi W."/>
            <person name="Powers J."/>
            <person name="Mochizuki Y."/>
            <person name="Imai T."/>
            <person name="Ko G.T.C."/>
            <person name="Driscoll D.A."/>
            <person name="Goldmuntz E."/>
            <person name="Edelberg J.M."/>
            <person name="Collins A."/>
            <person name="Eccles D."/>
            <person name="Irvine A.D."/>
            <person name="McKnight G.S."/>
            <person name="Basson C.T."/>
        </authorList>
    </citation>
    <scope>VARIANT CNC1 CYS-74</scope>
</reference>
<reference key="38">
    <citation type="journal article" date="2008" name="Hum. Mutat.">
        <title>In vitro functional studies of naturally occurring pathogenic PRKAR1A mutations that are not subject to nonsense mRNA decay.</title>
        <authorList>
            <person name="Greene E.L."/>
            <person name="Horvath A.D."/>
            <person name="Nesterova M."/>
            <person name="Giatzakis C."/>
            <person name="Bossis I."/>
            <person name="Stratakis C.A."/>
        </authorList>
    </citation>
    <scope>VARIANTS CNC1 ASN-9; SER-146; TYR-183; ASP-213 AND TRP-289</scope>
    <scope>CHARACTERIZATION OF VARIANTS CNC1 ASN-9; CYS-74; SER-146; TYR-183; ASP-213 AND TRP-289</scope>
</reference>
<reference key="39">
    <citation type="journal article" date="2012" name="Am. J. Hum. Genet.">
        <title>Exome sequencing identifies PDE4D mutations as another cause of acrodysostosis.</title>
        <authorList>
            <person name="Michot C."/>
            <person name="Le Goff C."/>
            <person name="Goldenberg A."/>
            <person name="Abhyankar A."/>
            <person name="Klein C."/>
            <person name="Kinning E."/>
            <person name="Guerrot A.M."/>
            <person name="Flahaut P."/>
            <person name="Duncombe A."/>
            <person name="Baujat G."/>
            <person name="Lyonnet S."/>
            <person name="Thalassinos C."/>
            <person name="Nitschke P."/>
            <person name="Casanova J.L."/>
            <person name="Le Merrer M."/>
            <person name="Munnich A."/>
            <person name="Cormier-Daire V."/>
        </authorList>
    </citation>
    <scope>VARIANT ACRDYS1 HIS-373</scope>
</reference>
<reference key="40">
    <citation type="journal article" date="2012" name="Am. J. Hum. Genet.">
        <title>Exome sequencing identifies PDE4D mutations in acrodysostosis.</title>
        <authorList>
            <person name="Lee H."/>
            <person name="Graham J.M. Jr."/>
            <person name="Rimoin D.L."/>
            <person name="Lachman R.S."/>
            <person name="Krejci P."/>
            <person name="Tompson S.W."/>
            <person name="Nelson S.F."/>
            <person name="Krakow D."/>
            <person name="Cohn D.H."/>
        </authorList>
    </citation>
    <scope>VARIANTS ACRDYS1 THR-327 AND PRO-335</scope>
</reference>
<reference key="41">
    <citation type="journal article" date="2012" name="J. Clin. Endocrinol. Metab.">
        <title>PRKAR1A and PDE4D mutations cause acrodysostosis but two distinct syndromes with or without GPCR-signaling hormone resistance.</title>
        <authorList>
            <person name="Linglart A."/>
            <person name="Fryssira H."/>
            <person name="Hiort O."/>
            <person name="Holterhus P.M."/>
            <person name="Perez de Nanclares G."/>
            <person name="Argente J."/>
            <person name="Heinrichs C."/>
            <person name="Kuechler A."/>
            <person name="Mantovani G."/>
            <person name="Leheup B."/>
            <person name="Wicart P."/>
            <person name="Chassot V."/>
            <person name="Schmidt D."/>
            <person name="Rubio-Cabezas O."/>
            <person name="Richter-Unruh A."/>
            <person name="Berrade S."/>
            <person name="Pereda A."/>
            <person name="Boros E."/>
            <person name="Munoz-Calvo M.T."/>
            <person name="Castori M."/>
            <person name="Gunes Y."/>
            <person name="Bertrand G."/>
            <person name="Bougneres P."/>
            <person name="Clauser E."/>
            <person name="Silve C."/>
        </authorList>
    </citation>
    <scope>VARIANTS ACRDYS1 ARG-285; GLU-289; VAL-328 AND LEU-335</scope>
</reference>
<reference key="42">
    <citation type="journal article" date="2012" name="J. Clin. Endocrinol. Metab.">
        <title>PRKAR1A mutation affecting cAMP-mediated G protein-coupled receptor signaling in a patient with acrodysostosis and hormone resistance.</title>
        <authorList>
            <person name="Nagasaki K."/>
            <person name="Iida T."/>
            <person name="Sato H."/>
            <person name="Ogawa Y."/>
            <person name="Kikuchi T."/>
            <person name="Saitoh A."/>
            <person name="Ogata T."/>
            <person name="Fukami M."/>
        </authorList>
    </citation>
    <scope>VARIANT ACRDYS1 ALA-239</scope>
    <scope>CHARACTERIZATION OF VARIANT ACRDYS1 ALA-239</scope>
</reference>
<reference key="43">
    <citation type="journal article" date="2013" name="Clin. Genet.">
        <title>Novel mutations of the PRKAR1A gene in patients with acrodysostosis.</title>
        <authorList>
            <person name="Muhn F."/>
            <person name="Klopocki E."/>
            <person name="Graul-Neumann L."/>
            <person name="Uhrig S."/>
            <person name="Colley A."/>
            <person name="Castori M."/>
            <person name="Lankes E."/>
            <person name="Henn W."/>
            <person name="Gruber-Sedlmayr U."/>
            <person name="Seifert W."/>
            <person name="Horn D."/>
        </authorList>
    </citation>
    <scope>VARIANTS ACRDYS1 THR-213 AND CYS-373</scope>
    <scope>VARIANT ASN-227</scope>
</reference>
<reference key="44">
    <citation type="journal article" date="2015" name="J. Biol. Chem.">
        <title>Functional characterization of PRKAR1A mutations reveals a unique molecular mechanism causing acrodysostosis but multiple mechanisms causing carney complex.</title>
        <authorList>
            <person name="Rhayem Y."/>
            <person name="Le Stunff C."/>
            <person name="Abdel Khalek W."/>
            <person name="Auzan C."/>
            <person name="Bertherat J."/>
            <person name="Linglart A."/>
            <person name="Couvineau A."/>
            <person name="Silve C."/>
            <person name="Clauser E."/>
        </authorList>
    </citation>
    <scope>VARIANT ACRDYS1 CYS-175</scope>
    <scope>CHARACTERIZATION OF VARIANTS ACRDYS1 CYS-175; THR-213; ARG-285; GLU-289; VAL-328 AND LEU-335</scope>
    <scope>CHARACTERIZATION OF VARIANTS CNC1 ASP-213 AND TRP-289</scope>
    <scope>FUNCTION</scope>
</reference>
<sequence length="381" mass="42982">MESGSTAASEEARSLRECELYVQKHNIQALLKDSIVQLCTARPERPMAFLREYFERLEKEEAKQIQNLQKAGTRTDSREDEISPPPPNPVVKGRRRRGAISAEVYTEEDAASYVRKVIPKDYKTMAALAKAIEKNVLFSHLDDNERSDIFDAMFSVSFIAGETVIQQGDEGDNFYVIDQGETDVYVNNEWATSVGEGGSFGELALIYGTPRAATVKAKTNVKLWGIDRDSYRRILMGSTLRKRKMYEEFLSKVSILESLDKWERLTVADALEPVQFEDGQKIVVQGEPGDEFFIILEGSAAVLQRRSENEEFVEVGRLGPSDYFGEIALLMNRPRAATVVARGPLKCVKLDRPRFERVLGPCSDILKRNIQQYNSFVSLSV</sequence>
<feature type="chain" id="PRO_0000205377" description="cAMP-dependent protein kinase type I-alpha regulatory subunit">
    <location>
        <begin position="1"/>
        <end position="381"/>
    </location>
</feature>
<feature type="region of interest" description="Dimerization and phosphorylation">
    <location>
        <begin position="1"/>
        <end position="136"/>
    </location>
</feature>
<feature type="region of interest" description="Disordered" evidence="4">
    <location>
        <begin position="64"/>
        <end position="96"/>
    </location>
</feature>
<feature type="short sequence motif" description="Pseudophosphorylation motif">
    <location>
        <begin position="96"/>
        <end position="100"/>
    </location>
</feature>
<feature type="binding site">
    <location>
        <begin position="137"/>
        <end position="254"/>
    </location>
    <ligand>
        <name>3',5'-cyclic AMP</name>
        <dbReference type="ChEBI" id="CHEBI:58165"/>
        <label>1</label>
    </ligand>
</feature>
<feature type="binding site">
    <location>
        <position position="202"/>
    </location>
    <ligand>
        <name>3',5'-cyclic AMP</name>
        <dbReference type="ChEBI" id="CHEBI:58165"/>
        <label>1</label>
    </ligand>
</feature>
<feature type="binding site">
    <location>
        <position position="211"/>
    </location>
    <ligand>
        <name>3',5'-cyclic AMP</name>
        <dbReference type="ChEBI" id="CHEBI:58165"/>
        <label>1</label>
    </ligand>
</feature>
<feature type="binding site">
    <location>
        <begin position="255"/>
        <end position="381"/>
    </location>
    <ligand>
        <name>3',5'-cyclic AMP</name>
        <dbReference type="ChEBI" id="CHEBI:58165"/>
        <label>2</label>
    </ligand>
</feature>
<feature type="binding site">
    <location>
        <position position="326"/>
    </location>
    <ligand>
        <name>3',5'-cyclic AMP</name>
        <dbReference type="ChEBI" id="CHEBI:58165"/>
        <label>2</label>
    </ligand>
</feature>
<feature type="binding site">
    <location>
        <position position="335"/>
    </location>
    <ligand>
        <name>3',5'-cyclic AMP</name>
        <dbReference type="ChEBI" id="CHEBI:58165"/>
        <label>2</label>
    </ligand>
</feature>
<feature type="modified residue" description="N-acetylmethionine" evidence="6 32 36 37">
    <location>
        <position position="1"/>
    </location>
</feature>
<feature type="modified residue" description="Phosphoserine" evidence="2">
    <location>
        <position position="3"/>
    </location>
</feature>
<feature type="modified residue" description="Phosphothreonine" evidence="39">
    <location>
        <position position="75"/>
    </location>
</feature>
<feature type="modified residue" description="Phosphoserine" evidence="39">
    <location>
        <position position="77"/>
    </location>
</feature>
<feature type="modified residue" description="Phosphoserine" evidence="27 28 29 30 31 33 34 35 38 39">
    <location>
        <position position="83"/>
    </location>
</feature>
<feature type="modified residue" description="Phosphoserine" evidence="3">
    <location>
        <position position="101"/>
    </location>
</feature>
<feature type="modified residue" description="Phosphoserine" evidence="2">
    <location>
        <position position="258"/>
    </location>
</feature>
<feature type="disulfide bond" description="Interchain (with C-39)" evidence="1">
    <location>
        <position position="18"/>
    </location>
</feature>
<feature type="disulfide bond" description="Interchain (with C-18)" evidence="1">
    <location>
        <position position="39"/>
    </location>
</feature>
<feature type="splice variant" id="VSP_054833" description="In isoform 2." evidence="26">
    <original>EIALLMNRPRAA</original>
    <variation>HLIISRRSIPLG</variation>
    <location>
        <begin position="326"/>
        <end position="337"/>
    </location>
</feature>
<feature type="splice variant" id="VSP_054834" description="In isoform 2." evidence="26">
    <location>
        <begin position="338"/>
        <end position="381"/>
    </location>
</feature>
<feature type="sequence variant" id="VAR_046894" description="In CNC1; exhibits increased PKA activity which is attributed to decreased binding to cAMP and/or the catalytic subunit." evidence="11">
    <original>S</original>
    <variation>N</variation>
    <location>
        <position position="9"/>
    </location>
</feature>
<feature type="sequence variant" id="VAR_046895" description="In CNC1; exhibits increased PKA activity which is attributed to decreased binding to cAMP and/or the catalytic subunit; dbSNP:rs137853303." evidence="7 11">
    <original>R</original>
    <variation>C</variation>
    <location>
        <position position="74"/>
    </location>
</feature>
<feature type="sequence variant" id="VAR_046896" description="In CNC1; exhibits increased PKA activity which is attributed to decreased binding to cAMP and/or the catalytic subunit." evidence="11">
    <original>R</original>
    <variation>S</variation>
    <location>
        <position position="146"/>
    </location>
</feature>
<feature type="sequence variant" id="VAR_075533" description="In ACRDYS1; reduces PKA activity; decreases cAMP binding." evidence="24">
    <original>Y</original>
    <variation>C</variation>
    <location>
        <position position="175"/>
    </location>
</feature>
<feature type="sequence variant" id="VAR_046897" description="In CNC1; exhibits increased PKA activity which is attributed to decreased binding to cAMP and/or the catalytic subunit." evidence="11">
    <original>D</original>
    <variation>Y</variation>
    <location>
        <position position="183"/>
    </location>
</feature>
<feature type="sequence variant" id="VAR_046898" description="In CNC1; exhibits increased PKA activity which is attributed to decreased binding to cAMP and/or the catalytic subunit; reduces protein degradation; dbSNP:rs281864786." evidence="11 24">
    <original>A</original>
    <variation>D</variation>
    <location>
        <position position="213"/>
    </location>
</feature>
<feature type="sequence variant" id="VAR_069456" description="In ACRDYS1; reduces PKA activity; decreases cAMP binding; reduces protein degradation." evidence="23 24">
    <original>A</original>
    <variation>T</variation>
    <location>
        <position position="213"/>
    </location>
</feature>
<feature type="sequence variant" id="VAR_069457" evidence="23">
    <original>D</original>
    <variation>N</variation>
    <location>
        <position position="227"/>
    </location>
</feature>
<feature type="sequence variant" id="VAR_069458" description="In ACRDYS1; impairs response of PKA to c-AMP." evidence="18">
    <original>T</original>
    <variation>A</variation>
    <location>
        <position position="239"/>
    </location>
</feature>
<feature type="sequence variant" id="VAR_069459" description="In ACRDYS1; reduces PKA activity; decreases cAMP binding; dbSNP:rs1555814719." evidence="20 24">
    <original>Q</original>
    <variation>R</variation>
    <location>
        <position position="285"/>
    </location>
</feature>
<feature type="sequence variant" id="VAR_069460" description="In ACRDYS1; reduces PKA activity; decreases cAMP binding; reduces protein degradation." evidence="20 24">
    <original>G</original>
    <variation>E</variation>
    <location>
        <position position="289"/>
    </location>
</feature>
<feature type="sequence variant" id="VAR_046899" description="In CNC1; exhibits increased PKA activity which is attributed to decreased binding to cAMP and/or the catalytic subunit; accelerates protein degradation." evidence="11 24">
    <original>G</original>
    <variation>W</variation>
    <location>
        <position position="289"/>
    </location>
</feature>
<feature type="sequence variant" id="VAR_069461" description="In ACRDYS1; dbSNP:rs387906695." evidence="17">
    <original>I</original>
    <variation>T</variation>
    <location>
        <position position="327"/>
    </location>
</feature>
<feature type="sequence variant" id="VAR_069462" description="In ACRDYS1; disrupts cAMP binding." evidence="20 24">
    <original>A</original>
    <variation>V</variation>
    <location>
        <position position="328"/>
    </location>
</feature>
<feature type="sequence variant" id="VAR_069464" description="In ACRDYS1; disrupts cAMP binding." evidence="20 24">
    <original>R</original>
    <variation>L</variation>
    <location>
        <position position="335"/>
    </location>
</feature>
<feature type="sequence variant" id="VAR_069463" description="In ACRDYS1; dbSNP:rs387906694." evidence="17">
    <original>R</original>
    <variation>P</variation>
    <location>
        <position position="335"/>
    </location>
</feature>
<feature type="sequence variant" id="VAR_069465" description="In ACRDYS1." evidence="23">
    <original>Y</original>
    <variation>C</variation>
    <location>
        <position position="373"/>
    </location>
</feature>
<feature type="sequence variant" id="VAR_068241" description="In ACRDYS1; dbSNP:rs387906693." evidence="16">
    <original>Y</original>
    <variation>H</variation>
    <location>
        <position position="373"/>
    </location>
</feature>
<feature type="mutagenesis site" description="Impairs response of PKA to c-AMP." evidence="15">
    <original>Y</original>
    <variation>A</variation>
    <location>
        <position position="373"/>
    </location>
</feature>
<feature type="helix" evidence="40">
    <location>
        <begin position="237"/>
        <end position="250"/>
    </location>
</feature>
<feature type="helix" evidence="40">
    <location>
        <begin position="254"/>
        <end position="256"/>
    </location>
</feature>
<feature type="helix" evidence="40">
    <location>
        <begin position="261"/>
        <end position="270"/>
    </location>
</feature>
<feature type="strand" evidence="40">
    <location>
        <begin position="272"/>
        <end position="276"/>
    </location>
</feature>
<feature type="strand" evidence="40">
    <location>
        <begin position="281"/>
        <end position="283"/>
    </location>
</feature>
<feature type="strand" evidence="40">
    <location>
        <begin position="291"/>
        <end position="304"/>
    </location>
</feature>
<feature type="strand" evidence="40">
    <location>
        <begin position="313"/>
        <end position="318"/>
    </location>
</feature>
<feature type="helix" evidence="40">
    <location>
        <begin position="326"/>
        <end position="330"/>
    </location>
</feature>
<feature type="strand" evidence="40">
    <location>
        <begin position="336"/>
        <end position="351"/>
    </location>
</feature>
<feature type="helix" evidence="40">
    <location>
        <begin position="352"/>
        <end position="358"/>
    </location>
</feature>
<feature type="helix" evidence="40">
    <location>
        <begin position="360"/>
        <end position="362"/>
    </location>
</feature>
<feature type="helix" evidence="40">
    <location>
        <begin position="363"/>
        <end position="370"/>
    </location>
</feature>
<feature type="turn" evidence="40">
    <location>
        <begin position="371"/>
        <end position="376"/>
    </location>
</feature>
<dbReference type="EMBL" id="M18468">
    <property type="protein sequence ID" value="AAB50922.1"/>
    <property type="molecule type" value="mRNA"/>
</dbReference>
<dbReference type="EMBL" id="M33336">
    <property type="protein sequence ID" value="AAB50921.1"/>
    <property type="molecule type" value="mRNA"/>
</dbReference>
<dbReference type="EMBL" id="S54705">
    <property type="status" value="NOT_ANNOTATED_CDS"/>
    <property type="molecule type" value="mRNA"/>
</dbReference>
<dbReference type="EMBL" id="S54707">
    <property type="status" value="NOT_ANNOTATED_CDS"/>
    <property type="molecule type" value="mRNA"/>
</dbReference>
<dbReference type="EMBL" id="S54709">
    <property type="status" value="NOT_ANNOTATED_CDS"/>
    <property type="molecule type" value="mRNA"/>
</dbReference>
<dbReference type="EMBL" id="S54711">
    <property type="status" value="NOT_ANNOTATED_CDS"/>
    <property type="molecule type" value="mRNA"/>
</dbReference>
<dbReference type="EMBL" id="Y07642">
    <property type="protein sequence ID" value="CAA68925.1"/>
    <property type="molecule type" value="mRNA"/>
</dbReference>
<dbReference type="EMBL" id="AC079210">
    <property type="status" value="NOT_ANNOTATED_CDS"/>
    <property type="molecule type" value="Genomic_DNA"/>
</dbReference>
<dbReference type="EMBL" id="BC036285">
    <property type="protein sequence ID" value="AAH36285.1"/>
    <property type="molecule type" value="mRNA"/>
</dbReference>
<dbReference type="EMBL" id="BC093042">
    <property type="protein sequence ID" value="AAH93042.1"/>
    <property type="molecule type" value="mRNA"/>
</dbReference>
<dbReference type="CCDS" id="CCDS11678.1">
    <molecule id="P10644-1"/>
</dbReference>
<dbReference type="CCDS" id="CCDS62307.1">
    <molecule id="P10644-2"/>
</dbReference>
<dbReference type="PIR" id="A34627">
    <property type="entry name" value="OKHU1R"/>
</dbReference>
<dbReference type="RefSeq" id="NP_001263218.1">
    <molecule id="P10644-1"/>
    <property type="nucleotide sequence ID" value="NM_001276289.2"/>
</dbReference>
<dbReference type="RefSeq" id="NP_001263219.1">
    <molecule id="P10644-2"/>
    <property type="nucleotide sequence ID" value="NM_001276290.1"/>
</dbReference>
<dbReference type="RefSeq" id="NP_001265362.1">
    <molecule id="P10644-1"/>
    <property type="nucleotide sequence ID" value="NM_001278433.2"/>
</dbReference>
<dbReference type="RefSeq" id="NP_001356318.1">
    <molecule id="P10644-1"/>
    <property type="nucleotide sequence ID" value="NM_001369389.1"/>
</dbReference>
<dbReference type="RefSeq" id="NP_001356319.1">
    <molecule id="P10644-1"/>
    <property type="nucleotide sequence ID" value="NM_001369390.1"/>
</dbReference>
<dbReference type="RefSeq" id="NP_002725.1">
    <molecule id="P10644-1"/>
    <property type="nucleotide sequence ID" value="NM_002734.5"/>
</dbReference>
<dbReference type="RefSeq" id="NP_997636.1">
    <molecule id="P10644-1"/>
    <property type="nucleotide sequence ID" value="NM_212471.3"/>
</dbReference>
<dbReference type="RefSeq" id="NP_997637.1">
    <molecule id="P10644-1"/>
    <property type="nucleotide sequence ID" value="NM_212472.2"/>
</dbReference>
<dbReference type="RefSeq" id="XP_011523285.1">
    <property type="nucleotide sequence ID" value="XM_011524983.2"/>
</dbReference>
<dbReference type="RefSeq" id="XP_011523286.1">
    <molecule id="P10644-1"/>
    <property type="nucleotide sequence ID" value="XM_011524984.4"/>
</dbReference>
<dbReference type="RefSeq" id="XP_011523287.1">
    <property type="nucleotide sequence ID" value="XM_011524985.2"/>
</dbReference>
<dbReference type="RefSeq" id="XP_047292325.1">
    <molecule id="P10644-1"/>
    <property type="nucleotide sequence ID" value="XM_047436369.1"/>
</dbReference>
<dbReference type="RefSeq" id="XP_047292326.1">
    <molecule id="P10644-1"/>
    <property type="nucleotide sequence ID" value="XM_047436370.1"/>
</dbReference>
<dbReference type="RefSeq" id="XP_054172611.1">
    <molecule id="P10644-1"/>
    <property type="nucleotide sequence ID" value="XM_054316636.1"/>
</dbReference>
<dbReference type="RefSeq" id="XP_054172612.1">
    <molecule id="P10644-1"/>
    <property type="nucleotide sequence ID" value="XM_054316637.1"/>
</dbReference>
<dbReference type="RefSeq" id="XP_054172613.1">
    <molecule id="P10644-1"/>
    <property type="nucleotide sequence ID" value="XM_054316638.1"/>
</dbReference>
<dbReference type="PDB" id="5KJX">
    <property type="method" value="X-ray"/>
    <property type="resolution" value="1.90 A"/>
    <property type="chains" value="A=234-381"/>
</dbReference>
<dbReference type="PDB" id="5KJY">
    <property type="method" value="X-ray"/>
    <property type="resolution" value="2.00 A"/>
    <property type="chains" value="A=234-381"/>
</dbReference>
<dbReference type="PDB" id="5KJZ">
    <property type="method" value="X-ray"/>
    <property type="resolution" value="1.35 A"/>
    <property type="chains" value="A=234-381"/>
</dbReference>
<dbReference type="PDBsum" id="5KJX"/>
<dbReference type="PDBsum" id="5KJY"/>
<dbReference type="PDBsum" id="5KJZ"/>
<dbReference type="SMR" id="P10644"/>
<dbReference type="BioGRID" id="111559">
    <property type="interactions" value="323"/>
</dbReference>
<dbReference type="CORUM" id="P10644"/>
<dbReference type="DIP" id="DIP-34368N"/>
<dbReference type="FunCoup" id="P10644">
    <property type="interactions" value="1167"/>
</dbReference>
<dbReference type="IntAct" id="P10644">
    <property type="interactions" value="217"/>
</dbReference>
<dbReference type="MINT" id="P10644"/>
<dbReference type="STRING" id="9606.ENSP00000376475"/>
<dbReference type="BindingDB" id="P10644"/>
<dbReference type="ChEMBL" id="CHEMBL4928"/>
<dbReference type="DrugBank" id="DB01790">
    <property type="generic name" value="(Rp)-cAMPS"/>
</dbReference>
<dbReference type="DrugBank" id="DB02527">
    <property type="generic name" value="Cyclic adenosine monophosphate"/>
</dbReference>
<dbReference type="DrugBank" id="DB02315">
    <property type="generic name" value="Cyclic GMP"/>
</dbReference>
<dbReference type="DrugBank" id="DB05798">
    <property type="generic name" value="GEM-231"/>
</dbReference>
<dbReference type="GuidetoPHARMACOLOGY" id="1472"/>
<dbReference type="GlyGen" id="P10644">
    <property type="glycosylation" value="1 site, 1 O-linked glycan (1 site)"/>
</dbReference>
<dbReference type="iPTMnet" id="P10644"/>
<dbReference type="MetOSite" id="P10644"/>
<dbReference type="PhosphoSitePlus" id="P10644"/>
<dbReference type="SwissPalm" id="P10644"/>
<dbReference type="BioMuta" id="PRKAR1A"/>
<dbReference type="DMDM" id="125193"/>
<dbReference type="OGP" id="P10644"/>
<dbReference type="REPRODUCTION-2DPAGE" id="IPI00021831"/>
<dbReference type="jPOST" id="P10644"/>
<dbReference type="MassIVE" id="P10644"/>
<dbReference type="PaxDb" id="9606-ENSP00000376475"/>
<dbReference type="PeptideAtlas" id="P10644"/>
<dbReference type="ProteomicsDB" id="52634">
    <molecule id="P10644-1"/>
</dbReference>
<dbReference type="Pumba" id="P10644"/>
<dbReference type="Antibodypedia" id="31783">
    <property type="antibodies" value="384 antibodies from 35 providers"/>
</dbReference>
<dbReference type="DNASU" id="5573"/>
<dbReference type="Ensembl" id="ENST00000358598.6">
    <molecule id="P10644-1"/>
    <property type="protein sequence ID" value="ENSP00000351410.1"/>
    <property type="gene ID" value="ENSG00000108946.17"/>
</dbReference>
<dbReference type="Ensembl" id="ENST00000392711.5">
    <molecule id="P10644-1"/>
    <property type="protein sequence ID" value="ENSP00000376475.1"/>
    <property type="gene ID" value="ENSG00000108946.17"/>
</dbReference>
<dbReference type="Ensembl" id="ENST00000536854.6">
    <molecule id="P10644-1"/>
    <property type="protein sequence ID" value="ENSP00000445625.1"/>
    <property type="gene ID" value="ENSG00000108946.17"/>
</dbReference>
<dbReference type="Ensembl" id="ENST00000585427.6">
    <molecule id="P10644-1"/>
    <property type="protein sequence ID" value="ENSP00000464715.2"/>
    <property type="gene ID" value="ENSG00000108946.17"/>
</dbReference>
<dbReference type="Ensembl" id="ENST00000585981.6">
    <molecule id="P10644-2"/>
    <property type="protein sequence ID" value="ENSP00000467311.2"/>
    <property type="gene ID" value="ENSG00000108946.17"/>
</dbReference>
<dbReference type="Ensembl" id="ENST00000586397.5">
    <molecule id="P10644-1"/>
    <property type="protein sequence ID" value="ENSP00000466459.1"/>
    <property type="gene ID" value="ENSG00000108946.17"/>
</dbReference>
<dbReference type="Ensembl" id="ENST00000588178.6">
    <molecule id="P10644-1"/>
    <property type="protein sequence ID" value="ENSP00000465013.2"/>
    <property type="gene ID" value="ENSG00000108946.17"/>
</dbReference>
<dbReference type="Ensembl" id="ENST00000588188.7">
    <molecule id="P10644-2"/>
    <property type="protein sequence ID" value="ENSP00000468106.2"/>
    <property type="gene ID" value="ENSG00000108946.17"/>
</dbReference>
<dbReference type="Ensembl" id="ENST00000589017.6">
    <molecule id="P10644-1"/>
    <property type="protein sequence ID" value="ENSP00000465445.2"/>
    <property type="gene ID" value="ENSG00000108946.17"/>
</dbReference>
<dbReference type="Ensembl" id="ENST00000589228.6">
    <molecule id="P10644-1"/>
    <property type="protein sequence ID" value="ENSP00000464977.2"/>
    <property type="gene ID" value="ENSG00000108946.17"/>
</dbReference>
<dbReference type="Ensembl" id="ENST00000589480.6">
    <molecule id="P10644-1"/>
    <property type="protein sequence ID" value="ENSP00000466649.2"/>
    <property type="gene ID" value="ENSG00000108946.17"/>
</dbReference>
<dbReference type="Ensembl" id="ENST00000711037.1">
    <molecule id="P10644-2"/>
    <property type="protein sequence ID" value="ENSP00000518555.1"/>
    <property type="gene ID" value="ENSG00000108946.17"/>
</dbReference>
<dbReference type="GeneID" id="5573"/>
<dbReference type="KEGG" id="hsa:5573"/>
<dbReference type="MANE-Select" id="ENST00000589228.6">
    <property type="protein sequence ID" value="ENSP00000464977.2"/>
    <property type="RefSeq nucleotide sequence ID" value="NM_002734.5"/>
    <property type="RefSeq protein sequence ID" value="NP_002725.1"/>
</dbReference>
<dbReference type="UCSC" id="uc002jhg.5">
    <molecule id="P10644-1"/>
    <property type="organism name" value="human"/>
</dbReference>
<dbReference type="AGR" id="HGNC:9388"/>
<dbReference type="CTD" id="5573"/>
<dbReference type="DisGeNET" id="5573"/>
<dbReference type="GeneCards" id="PRKAR1A"/>
<dbReference type="GeneReviews" id="PRKAR1A"/>
<dbReference type="HGNC" id="HGNC:9388">
    <property type="gene designation" value="PRKAR1A"/>
</dbReference>
<dbReference type="HPA" id="ENSG00000108946">
    <property type="expression patterns" value="Low tissue specificity"/>
</dbReference>
<dbReference type="MalaCards" id="PRKAR1A"/>
<dbReference type="MIM" id="101800">
    <property type="type" value="phenotype"/>
</dbReference>
<dbReference type="MIM" id="160980">
    <property type="type" value="phenotype"/>
</dbReference>
<dbReference type="MIM" id="188830">
    <property type="type" value="gene"/>
</dbReference>
<dbReference type="MIM" id="255960">
    <property type="type" value="phenotype"/>
</dbReference>
<dbReference type="MIM" id="610489">
    <property type="type" value="phenotype"/>
</dbReference>
<dbReference type="neXtProt" id="NX_P10644"/>
<dbReference type="OpenTargets" id="ENSG00000108946"/>
<dbReference type="Orphanet" id="950">
    <property type="disease" value="Acrodysostosis"/>
</dbReference>
<dbReference type="Orphanet" id="520">
    <property type="disease" value="Acute promyelocytic leukemia"/>
</dbReference>
<dbReference type="Orphanet" id="1501">
    <property type="disease" value="Adrenocortical carcinoma"/>
</dbReference>
<dbReference type="Orphanet" id="1359">
    <property type="disease" value="Carney complex"/>
</dbReference>
<dbReference type="Orphanet" id="615">
    <property type="disease" value="Familial atrial myxoma"/>
</dbReference>
<dbReference type="Orphanet" id="647772">
    <property type="disease" value="Isolated primary pigmented nodular adrenocortical disease"/>
</dbReference>
<dbReference type="PharmGKB" id="PA33754"/>
<dbReference type="VEuPathDB" id="HostDB:ENSG00000108946"/>
<dbReference type="eggNOG" id="KOG1113">
    <property type="taxonomic scope" value="Eukaryota"/>
</dbReference>
<dbReference type="GeneTree" id="ENSGT00940000155148"/>
<dbReference type="HOGENOM" id="CLU_018310_1_0_1"/>
<dbReference type="InParanoid" id="P10644"/>
<dbReference type="OMA" id="YELYMNA"/>
<dbReference type="OrthoDB" id="417078at2759"/>
<dbReference type="PAN-GO" id="P10644">
    <property type="GO annotations" value="6 GO annotations based on evolutionary models"/>
</dbReference>
<dbReference type="PhylomeDB" id="P10644"/>
<dbReference type="TreeFam" id="TF314920"/>
<dbReference type="PathwayCommons" id="P10644"/>
<dbReference type="Reactome" id="R-HSA-163615">
    <property type="pathway name" value="PKA activation"/>
</dbReference>
<dbReference type="Reactome" id="R-HSA-164378">
    <property type="pathway name" value="PKA activation in glucagon signalling"/>
</dbReference>
<dbReference type="Reactome" id="R-HSA-180024">
    <property type="pathway name" value="DARPP-32 events"/>
</dbReference>
<dbReference type="Reactome" id="R-HSA-381676">
    <property type="pathway name" value="Glucagon-like Peptide-1 (GLP1) regulates insulin secretion"/>
</dbReference>
<dbReference type="Reactome" id="R-HSA-432040">
    <property type="pathway name" value="Vasopressin regulates renal water homeostasis via Aquaporins"/>
</dbReference>
<dbReference type="Reactome" id="R-HSA-442720">
    <property type="pathway name" value="CREB1 phosphorylation through the activation of Adenylate Cyclase"/>
</dbReference>
<dbReference type="Reactome" id="R-HSA-5610787">
    <property type="pathway name" value="Hedgehog 'off' state"/>
</dbReference>
<dbReference type="Reactome" id="R-HSA-9634597">
    <property type="pathway name" value="GPER1 signaling"/>
</dbReference>
<dbReference type="Reactome" id="R-HSA-9660821">
    <property type="pathway name" value="ADORA2B mediated anti-inflammatory cytokines production"/>
</dbReference>
<dbReference type="Reactome" id="R-HSA-9664323">
    <property type="pathway name" value="FCGR3A-mediated IL10 synthesis"/>
</dbReference>
<dbReference type="Reactome" id="R-HSA-9700645">
    <property type="pathway name" value="ALK mutants bind TKIs"/>
</dbReference>
<dbReference type="Reactome" id="R-HSA-9725370">
    <property type="pathway name" value="Signaling by ALK fusions and activated point mutants"/>
</dbReference>
<dbReference type="Reactome" id="R-HSA-983231">
    <property type="pathway name" value="Factors involved in megakaryocyte development and platelet production"/>
</dbReference>
<dbReference type="Reactome" id="R-HSA-9856530">
    <property type="pathway name" value="High laminar flow shear stress activates signaling by PIEZO1 and PECAM1:CDH5:KDR in endothelial cells"/>
</dbReference>
<dbReference type="SABIO-RK" id="P10644"/>
<dbReference type="SignaLink" id="P10644"/>
<dbReference type="SIGNOR" id="P10644"/>
<dbReference type="BioGRID-ORCS" id="5573">
    <property type="hits" value="106 hits in 1172 CRISPR screens"/>
</dbReference>
<dbReference type="CD-CODE" id="FB4E32DD">
    <property type="entry name" value="Presynaptic clusters and postsynaptic densities"/>
</dbReference>
<dbReference type="ChiTaRS" id="PRKAR1A">
    <property type="organism name" value="human"/>
</dbReference>
<dbReference type="GenomeRNAi" id="5573"/>
<dbReference type="Pharos" id="P10644">
    <property type="development level" value="Tbio"/>
</dbReference>
<dbReference type="PRO" id="PR:P10644"/>
<dbReference type="Proteomes" id="UP000005640">
    <property type="component" value="Chromosome 17"/>
</dbReference>
<dbReference type="RNAct" id="P10644">
    <property type="molecule type" value="protein"/>
</dbReference>
<dbReference type="Bgee" id="ENSG00000108946">
    <property type="expression patterns" value="Expressed in mucosa of paranasal sinus and 207 other cell types or tissues"/>
</dbReference>
<dbReference type="ExpressionAtlas" id="P10644">
    <property type="expression patterns" value="baseline and differential"/>
</dbReference>
<dbReference type="GO" id="GO:0005952">
    <property type="term" value="C:cAMP-dependent protein kinase complex"/>
    <property type="evidence" value="ECO:0000318"/>
    <property type="project" value="GO_Central"/>
</dbReference>
<dbReference type="GO" id="GO:0005813">
    <property type="term" value="C:centrosome"/>
    <property type="evidence" value="ECO:0007669"/>
    <property type="project" value="Ensembl"/>
</dbReference>
<dbReference type="GO" id="GO:0097546">
    <property type="term" value="C:ciliary base"/>
    <property type="evidence" value="ECO:0000304"/>
    <property type="project" value="Reactome"/>
</dbReference>
<dbReference type="GO" id="GO:0005737">
    <property type="term" value="C:cytoplasm"/>
    <property type="evidence" value="ECO:0000314"/>
    <property type="project" value="UniProtKB"/>
</dbReference>
<dbReference type="GO" id="GO:0005829">
    <property type="term" value="C:cytosol"/>
    <property type="evidence" value="ECO:0000318"/>
    <property type="project" value="GO_Central"/>
</dbReference>
<dbReference type="GO" id="GO:0098978">
    <property type="term" value="C:glutamatergic synapse"/>
    <property type="evidence" value="ECO:0007669"/>
    <property type="project" value="Ensembl"/>
</dbReference>
<dbReference type="GO" id="GO:0016020">
    <property type="term" value="C:membrane"/>
    <property type="evidence" value="ECO:0007005"/>
    <property type="project" value="UniProtKB"/>
</dbReference>
<dbReference type="GO" id="GO:0005771">
    <property type="term" value="C:multivesicular body"/>
    <property type="evidence" value="ECO:0007669"/>
    <property type="project" value="Ensembl"/>
</dbReference>
<dbReference type="GO" id="GO:0031594">
    <property type="term" value="C:neuromuscular junction"/>
    <property type="evidence" value="ECO:0007669"/>
    <property type="project" value="Ensembl"/>
</dbReference>
<dbReference type="GO" id="GO:0031588">
    <property type="term" value="C:nucleotide-activated protein kinase complex"/>
    <property type="evidence" value="ECO:0000314"/>
    <property type="project" value="BHF-UCL"/>
</dbReference>
<dbReference type="GO" id="GO:0044853">
    <property type="term" value="C:plasma membrane raft"/>
    <property type="evidence" value="ECO:0000314"/>
    <property type="project" value="UniProtKB"/>
</dbReference>
<dbReference type="GO" id="GO:0032991">
    <property type="term" value="C:protein-containing complex"/>
    <property type="evidence" value="ECO:0000314"/>
    <property type="project" value="UniProtKB"/>
</dbReference>
<dbReference type="GO" id="GO:0120212">
    <property type="term" value="C:sperm head-tail coupling apparatus"/>
    <property type="evidence" value="ECO:0007669"/>
    <property type="project" value="Ensembl"/>
</dbReference>
<dbReference type="GO" id="GO:0030552">
    <property type="term" value="F:cAMP binding"/>
    <property type="evidence" value="ECO:0000318"/>
    <property type="project" value="GO_Central"/>
</dbReference>
<dbReference type="GO" id="GO:0004862">
    <property type="term" value="F:cAMP-dependent protein kinase inhibitor activity"/>
    <property type="evidence" value="ECO:0000314"/>
    <property type="project" value="BHF-UCL"/>
</dbReference>
<dbReference type="GO" id="GO:0008603">
    <property type="term" value="F:cAMP-dependent protein kinase regulator activity"/>
    <property type="evidence" value="ECO:0000314"/>
    <property type="project" value="BHF-UCL"/>
</dbReference>
<dbReference type="GO" id="GO:0019904">
    <property type="term" value="F:protein domain specific binding"/>
    <property type="evidence" value="ECO:0000353"/>
    <property type="project" value="UniProtKB"/>
</dbReference>
<dbReference type="GO" id="GO:0034236">
    <property type="term" value="F:protein kinase A catalytic subunit binding"/>
    <property type="evidence" value="ECO:0000353"/>
    <property type="project" value="UniProtKB"/>
</dbReference>
<dbReference type="GO" id="GO:0031625">
    <property type="term" value="F:ubiquitin protein ligase binding"/>
    <property type="evidence" value="ECO:0000314"/>
    <property type="project" value="UniProtKB"/>
</dbReference>
<dbReference type="GO" id="GO:0007189">
    <property type="term" value="P:adenylate cyclase-activating G protein-coupled receptor signaling pathway"/>
    <property type="evidence" value="ECO:0000318"/>
    <property type="project" value="GO_Central"/>
</dbReference>
<dbReference type="GO" id="GO:0060038">
    <property type="term" value="P:cardiac muscle cell proliferation"/>
    <property type="evidence" value="ECO:0007669"/>
    <property type="project" value="Ensembl"/>
</dbReference>
<dbReference type="GO" id="GO:0071377">
    <property type="term" value="P:cellular response to glucagon stimulus"/>
    <property type="evidence" value="ECO:0007669"/>
    <property type="project" value="Ensembl"/>
</dbReference>
<dbReference type="GO" id="GO:0035556">
    <property type="term" value="P:intracellular signal transduction"/>
    <property type="evidence" value="ECO:0000304"/>
    <property type="project" value="ProtInc"/>
</dbReference>
<dbReference type="GO" id="GO:0001707">
    <property type="term" value="P:mesoderm formation"/>
    <property type="evidence" value="ECO:0007669"/>
    <property type="project" value="Ensembl"/>
</dbReference>
<dbReference type="GO" id="GO:0046007">
    <property type="term" value="P:negative regulation of activated T cell proliferation"/>
    <property type="evidence" value="ECO:0000315"/>
    <property type="project" value="UniProtKB"/>
</dbReference>
<dbReference type="GO" id="GO:0141162">
    <property type="term" value="P:negative regulation of cAMP/PKA signal transduction"/>
    <property type="evidence" value="ECO:0000314"/>
    <property type="project" value="BHF-UCL"/>
</dbReference>
<dbReference type="GO" id="GO:0010629">
    <property type="term" value="P:negative regulation of gene expression"/>
    <property type="evidence" value="ECO:0000315"/>
    <property type="project" value="ARUK-UCL"/>
</dbReference>
<dbReference type="GO" id="GO:0032024">
    <property type="term" value="P:positive regulation of insulin secretion"/>
    <property type="evidence" value="ECO:0007669"/>
    <property type="project" value="Ensembl"/>
</dbReference>
<dbReference type="GO" id="GO:0006357">
    <property type="term" value="P:regulation of transcription by RNA polymerase II"/>
    <property type="evidence" value="ECO:0000304"/>
    <property type="project" value="ProtInc"/>
</dbReference>
<dbReference type="GO" id="GO:0045214">
    <property type="term" value="P:sarcomere organization"/>
    <property type="evidence" value="ECO:0007669"/>
    <property type="project" value="Ensembl"/>
</dbReference>
<dbReference type="CDD" id="cd00038">
    <property type="entry name" value="CAP_ED"/>
    <property type="match status" value="2"/>
</dbReference>
<dbReference type="CDD" id="cd12101">
    <property type="entry name" value="DD_RIalpha_PKA"/>
    <property type="match status" value="1"/>
</dbReference>
<dbReference type="FunFam" id="2.60.120.10:FF:000013">
    <property type="entry name" value="cAMP-dependent protein kinase type I regulatory subunit"/>
    <property type="match status" value="1"/>
</dbReference>
<dbReference type="FunFam" id="1.20.890.10:FF:000001">
    <property type="entry name" value="cAMP-dependent protein kinase type I-alpha regulatory subunit"/>
    <property type="match status" value="1"/>
</dbReference>
<dbReference type="FunFam" id="2.60.120.10:FF:000006">
    <property type="entry name" value="cAMP-dependent protein kinase type I-alpha regulatory subunit"/>
    <property type="match status" value="1"/>
</dbReference>
<dbReference type="Gene3D" id="1.20.890.10">
    <property type="entry name" value="cAMP-dependent protein kinase regulatory subunit, dimerization-anchoring domain"/>
    <property type="match status" value="1"/>
</dbReference>
<dbReference type="Gene3D" id="2.60.120.10">
    <property type="entry name" value="Jelly Rolls"/>
    <property type="match status" value="2"/>
</dbReference>
<dbReference type="InterPro" id="IPR050503">
    <property type="entry name" value="cAMP-dep_PK_reg_su-like"/>
</dbReference>
<dbReference type="InterPro" id="IPR012198">
    <property type="entry name" value="cAMP_dep_PK_reg_su"/>
</dbReference>
<dbReference type="InterPro" id="IPR003117">
    <property type="entry name" value="cAMP_dep_PK_reg_su_I/II_a/b"/>
</dbReference>
<dbReference type="InterPro" id="IPR018488">
    <property type="entry name" value="cNMP-bd_CS"/>
</dbReference>
<dbReference type="InterPro" id="IPR000595">
    <property type="entry name" value="cNMP-bd_dom"/>
</dbReference>
<dbReference type="InterPro" id="IPR018490">
    <property type="entry name" value="cNMP-bd_dom_sf"/>
</dbReference>
<dbReference type="InterPro" id="IPR014710">
    <property type="entry name" value="RmlC-like_jellyroll"/>
</dbReference>
<dbReference type="PANTHER" id="PTHR11635">
    <property type="entry name" value="CAMP-DEPENDENT PROTEIN KINASE REGULATORY CHAIN"/>
    <property type="match status" value="1"/>
</dbReference>
<dbReference type="PANTHER" id="PTHR11635:SF129">
    <property type="entry name" value="CAMP-DEPENDENT PROTEIN KINASE TYPE I-ALPHA REGULATORY SUBUNIT"/>
    <property type="match status" value="1"/>
</dbReference>
<dbReference type="Pfam" id="PF00027">
    <property type="entry name" value="cNMP_binding"/>
    <property type="match status" value="2"/>
</dbReference>
<dbReference type="Pfam" id="PF02197">
    <property type="entry name" value="RIIa"/>
    <property type="match status" value="1"/>
</dbReference>
<dbReference type="PIRSF" id="PIRSF000548">
    <property type="entry name" value="PK_regulatory"/>
    <property type="match status" value="1"/>
</dbReference>
<dbReference type="PRINTS" id="PR00103">
    <property type="entry name" value="CAMPKINASE"/>
</dbReference>
<dbReference type="SMART" id="SM00100">
    <property type="entry name" value="cNMP"/>
    <property type="match status" value="2"/>
</dbReference>
<dbReference type="SMART" id="SM00394">
    <property type="entry name" value="RIIa"/>
    <property type="match status" value="1"/>
</dbReference>
<dbReference type="SUPFAM" id="SSF51206">
    <property type="entry name" value="cAMP-binding domain-like"/>
    <property type="match status" value="2"/>
</dbReference>
<dbReference type="SUPFAM" id="SSF47391">
    <property type="entry name" value="Dimerization-anchoring domain of cAMP-dependent PK regulatory subunit"/>
    <property type="match status" value="1"/>
</dbReference>
<dbReference type="PROSITE" id="PS00888">
    <property type="entry name" value="CNMP_BINDING_1"/>
    <property type="match status" value="2"/>
</dbReference>
<dbReference type="PROSITE" id="PS00889">
    <property type="entry name" value="CNMP_BINDING_2"/>
    <property type="match status" value="2"/>
</dbReference>
<dbReference type="PROSITE" id="PS50042">
    <property type="entry name" value="CNMP_BINDING_3"/>
    <property type="match status" value="2"/>
</dbReference>
<protein>
    <recommendedName>
        <fullName>cAMP-dependent protein kinase type I-alpha regulatory subunit</fullName>
    </recommendedName>
    <alternativeName>
        <fullName>Tissue-specific extinguisher 1</fullName>
        <shortName>TSE1</shortName>
    </alternativeName>
</protein>
<gene>
    <name type="primary">PRKAR1A</name>
    <name type="synonym">PKR1</name>
    <name type="synonym">PRKAR1</name>
    <name type="synonym">TSE1</name>
</gene>
<organism>
    <name type="scientific">Homo sapiens</name>
    <name type="common">Human</name>
    <dbReference type="NCBI Taxonomy" id="9606"/>
    <lineage>
        <taxon>Eukaryota</taxon>
        <taxon>Metazoa</taxon>
        <taxon>Chordata</taxon>
        <taxon>Craniata</taxon>
        <taxon>Vertebrata</taxon>
        <taxon>Euteleostomi</taxon>
        <taxon>Mammalia</taxon>
        <taxon>Eutheria</taxon>
        <taxon>Euarchontoglires</taxon>
        <taxon>Primates</taxon>
        <taxon>Haplorrhini</taxon>
        <taxon>Catarrhini</taxon>
        <taxon>Hominidae</taxon>
        <taxon>Homo</taxon>
    </lineage>
</organism>
<proteinExistence type="evidence at protein level"/>
<comment type="function">
    <text evidence="10 13 24">Regulatory subunit of the cAMP-dependent protein kinases involved in cAMP signaling in cells.</text>
</comment>
<comment type="subunit">
    <text evidence="1 8 9 10 12 13 14 21 25">The inactive holoenzyme is composed of two regulatory chains and two catalytic chains. Activation by cAMP releases the two active catalytic monomers and the regulatory dimer. Interacts with PRKACA and PRKACB (PubMed:33058759). PRKAR1A also interacts with RFC2; the complex may be involved in cell survival. Interacts with AKAP4. Interacts with RARA; the interaction occurs in the presence of cAMP or FSH and regulates RARA transcriptional activity. Interacts with the phosphorylated form of PJA2. Interacts with CBFA2T3 (By similarity). Interacts with PRKX; regulates this cAMP-dependent protein kinase. Interacts with C2orf88/smAKAP; this interaction may target PRKAR1A to the plasma membrane. Interacts with AICDA. Interacts with PRRC1; resulting in PKA activation (PubMed:20018846).</text>
</comment>
<comment type="interaction">
    <interactant intactId="EBI-476431">
        <id>P10644</id>
    </interactant>
    <interactant intactId="EBI-3834328">
        <id>Q9GZX7</id>
        <label>AICDA</label>
    </interactant>
    <organismsDiffer>false</organismsDiffer>
    <experiments>5</experiments>
</comment>
<comment type="interaction">
    <interactant intactId="EBI-476431">
        <id>P10644</id>
    </interactant>
    <interactant intactId="EBI-703640">
        <id>P24588</id>
        <label>AKAP5</label>
    </interactant>
    <organismsDiffer>false</organismsDiffer>
    <experiments>3</experiments>
</comment>
<comment type="interaction">
    <interactant intactId="EBI-476431">
        <id>P10644</id>
    </interactant>
    <interactant intactId="EBI-10185182">
        <id>O43687-2</id>
        <label>AKAP7</label>
    </interactant>
    <organismsDiffer>false</organismsDiffer>
    <experiments>3</experiments>
</comment>
<comment type="interaction">
    <interactant intactId="EBI-476431">
        <id>P10644</id>
    </interactant>
    <interactant intactId="EBI-744298">
        <id>Q9BSF0</id>
        <label>C2orf88</label>
    </interactant>
    <organismsDiffer>false</organismsDiffer>
    <experiments>9</experiments>
</comment>
<comment type="interaction">
    <interactant intactId="EBI-476431">
        <id>P10644</id>
    </interactant>
    <interactant intactId="EBI-13328871">
        <id>Q9H6J7-2</id>
        <label>CSTPP1</label>
    </interactant>
    <organismsDiffer>false</organismsDiffer>
    <experiments>3</experiments>
</comment>
<comment type="interaction">
    <interactant intactId="EBI-476431">
        <id>P10644</id>
    </interactant>
    <interactant intactId="EBI-1755174">
        <id>Q86Y01</id>
        <label>DTX1</label>
    </interactant>
    <organismsDiffer>false</organismsDiffer>
    <experiments>3</experiments>
</comment>
<comment type="interaction">
    <interactant intactId="EBI-476431">
        <id>P10644</id>
    </interactant>
    <interactant intactId="EBI-12940382">
        <id>P0C7A2-2</id>
        <label>FAM153B</label>
    </interactant>
    <organismsDiffer>false</organismsDiffer>
    <experiments>3</experiments>
</comment>
<comment type="interaction">
    <interactant intactId="EBI-476431">
        <id>P10644</id>
    </interactant>
    <interactant intactId="EBI-746969">
        <id>Q9H0R8</id>
        <label>GABARAPL1</label>
    </interactant>
    <organismsDiffer>false</organismsDiffer>
    <experiments>2</experiments>
</comment>
<comment type="interaction">
    <interactant intactId="EBI-476431">
        <id>P10644</id>
    </interactant>
    <interactant intactId="EBI-742388">
        <id>Q9H8W4</id>
        <label>PLEKHF2</label>
    </interactant>
    <organismsDiffer>false</organismsDiffer>
    <experiments>3</experiments>
</comment>
<comment type="interaction">
    <interactant intactId="EBI-476431">
        <id>P10644</id>
    </interactant>
    <interactant intactId="EBI-476586">
        <id>P17612</id>
        <label>PRKACA</label>
    </interactant>
    <organismsDiffer>false</organismsDiffer>
    <experiments>16</experiments>
</comment>
<comment type="interaction">
    <interactant intactId="EBI-476431">
        <id>P10644</id>
    </interactant>
    <interactant intactId="EBI-2805516">
        <id>P31321</id>
        <label>PRKAR1B</label>
    </interactant>
    <organismsDiffer>false</organismsDiffer>
    <experiments>9</experiments>
</comment>
<comment type="interaction">
    <interactant intactId="EBI-476431">
        <id>P10644</id>
    </interactant>
    <interactant intactId="EBI-4302903">
        <id>P51817</id>
        <label>PRKX</label>
    </interactant>
    <organismsDiffer>false</organismsDiffer>
    <experiments>2</experiments>
</comment>
<comment type="interaction">
    <interactant intactId="EBI-476431">
        <id>P10644</id>
    </interactant>
    <interactant intactId="EBI-476409">
        <id>P35250</id>
        <label>RFC2</label>
    </interactant>
    <organismsDiffer>false</organismsDiffer>
    <experiments>7</experiments>
</comment>
<comment type="interaction">
    <interactant intactId="EBI-476431">
        <id>P10644</id>
    </interactant>
    <interactant intactId="EBI-6873025">
        <id>Q86UC2</id>
        <label>RSPH3</label>
    </interactant>
    <organismsDiffer>false</organismsDiffer>
    <experiments>3</experiments>
</comment>
<comment type="interaction">
    <interactant intactId="EBI-476431">
        <id>P10644</id>
    </interactant>
    <interactant intactId="EBI-1053182">
        <id>Q01105</id>
        <label>SET</label>
    </interactant>
    <organismsDiffer>false</organismsDiffer>
    <experiments>2</experiments>
</comment>
<comment type="interaction">
    <interactant intactId="EBI-476431">
        <id>P10644</id>
    </interactant>
    <interactant intactId="EBI-2643803">
        <id>Q8N0X7</id>
        <label>SPART</label>
    </interactant>
    <organismsDiffer>false</organismsDiffer>
    <experiments>3</experiments>
</comment>
<comment type="interaction">
    <interactant intactId="EBI-476431">
        <id>P10644</id>
    </interactant>
    <interactant intactId="EBI-740037">
        <id>O96006</id>
        <label>ZBED1</label>
    </interactant>
    <organismsDiffer>false</organismsDiffer>
    <experiments>3</experiments>
</comment>
<comment type="interaction">
    <interactant intactId="EBI-476431">
        <id>P10644</id>
    </interactant>
    <interactant intactId="EBI-7225021">
        <id>P03259-2</id>
    </interactant>
    <organismsDiffer>true</organismsDiffer>
    <experiments>5</experiments>
</comment>
<comment type="subcellular location">
    <subcellularLocation>
        <location evidence="21">Cell membrane</location>
    </subcellularLocation>
</comment>
<comment type="alternative products">
    <event type="alternative splicing"/>
    <isoform>
        <id>P10644-1</id>
        <name>1</name>
        <sequence type="displayed"/>
    </isoform>
    <isoform>
        <id>P10644-2</id>
        <name>2</name>
        <sequence type="described" ref="VSP_054833 VSP_054834"/>
    </isoform>
</comment>
<comment type="tissue specificity">
    <text>Four types of regulatory chains are found: I-alpha, I-beta, II-alpha, and II-beta. Their expression varies among tissues and is in some cases constitutive and in others inducible.</text>
</comment>
<comment type="PTM">
    <text>The pseudophosphorylation site binds to the substrate-binding region of the catalytic chain, resulting in the inhibition of its activity.</text>
</comment>
<comment type="disease" evidence="7 11 19 22 24">
    <disease id="DI-01319">
        <name>Carney complex 1</name>
        <acronym>CNC1</acronym>
        <description>CNC is a multiple neoplasia syndrome characterized by spotty skin pigmentation, cardiac and other myxomas, endocrine tumors, and psammomatous melanotic schwannomas.</description>
        <dbReference type="MIM" id="160980"/>
    </disease>
    <text>The disease is caused by variants affecting the gene represented in this entry.</text>
</comment>
<comment type="disease">
    <disease id="DI-01830">
        <name>Intracardiac myxoma</name>
        <acronym>INTMYX</acronym>
        <description>Inheritance is autosomal recessive.</description>
        <dbReference type="MIM" id="255960"/>
    </disease>
    <text>The disease is caused by variants affecting the gene represented in this entry.</text>
</comment>
<comment type="disease" evidence="5">
    <disease id="DI-00940">
        <name>Primary pigmented nodular adrenocortical disease 1</name>
        <acronym>PPNAD1</acronym>
        <description>A rare bilateral adrenal defect causing ACTH-independent Cushing syndrome. Macroscopic appearance of the adrenals is characteristic with small pigmented micronodules observed in the cortex. Clinical manifestations of Cushing syndrome include facial and truncal obesity, abdominal striae, muscular weakness, osteoporosis, arterial hypertension, diabetes. PPNAD1 is most often diagnosed in patients with Carney complex, a multiple neoplasia syndrome. However it can also be observed in patients without other manifestations.</description>
        <dbReference type="MIM" id="610489"/>
    </disease>
    <text>The disease is caused by variants affecting the gene represented in this entry.</text>
</comment>
<comment type="disease" evidence="15 16 17 18 20 23 24">
    <disease id="DI-03459">
        <name>Acrodysostosis 1, with or without hormone resistance</name>
        <acronym>ACRDYS1</acronym>
        <description>A form of skeletal dysplasia characterized by short stature, severe brachydactyly, facial dysostosis, and nasal hypoplasia. Affected individuals often have advanced bone age and obesity. Laboratory studies show resistance to multiple hormones, including parathyroid, thyrotropin, calcitonin, growth hormone-releasing hormone, and gonadotropin. However, not all patients show endocrine abnormalities.</description>
        <dbReference type="MIM" id="101800"/>
    </disease>
    <text>The disease is caused by variants affecting the gene represented in this entry.</text>
</comment>
<comment type="similarity">
    <text evidence="26">Belongs to the cAMP-dependent kinase regulatory chain family.</text>
</comment>
<comment type="online information" name="Atlas of Genetics and Cytogenetics in Oncology and Haematology">
    <link uri="https://atlasgeneticsoncology.org/gene/387/PRKAR1A"/>
</comment>
<evidence type="ECO:0000250" key="1"/>
<evidence type="ECO:0000250" key="2">
    <source>
        <dbReference type="UniProtKB" id="P09456"/>
    </source>
</evidence>
<evidence type="ECO:0000250" key="3">
    <source>
        <dbReference type="UniProtKB" id="Q9DBC7"/>
    </source>
</evidence>
<evidence type="ECO:0000256" key="4">
    <source>
        <dbReference type="SAM" id="MobiDB-lite"/>
    </source>
</evidence>
<evidence type="ECO:0000269" key="5">
    <source>
    </source>
</evidence>
<evidence type="ECO:0000269" key="6">
    <source>
    </source>
</evidence>
<evidence type="ECO:0000269" key="7">
    <source>
    </source>
</evidence>
<evidence type="ECO:0000269" key="8">
    <source>
    </source>
</evidence>
<evidence type="ECO:0000269" key="9">
    <source>
    </source>
</evidence>
<evidence type="ECO:0000269" key="10">
    <source>
    </source>
</evidence>
<evidence type="ECO:0000269" key="11">
    <source>
    </source>
</evidence>
<evidence type="ECO:0000269" key="12">
    <source>
    </source>
</evidence>
<evidence type="ECO:0000269" key="13">
    <source>
    </source>
</evidence>
<evidence type="ECO:0000269" key="14">
    <source>
    </source>
</evidence>
<evidence type="ECO:0000269" key="15">
    <source>
    </source>
</evidence>
<evidence type="ECO:0000269" key="16">
    <source>
    </source>
</evidence>
<evidence type="ECO:0000269" key="17">
    <source>
    </source>
</evidence>
<evidence type="ECO:0000269" key="18">
    <source>
    </source>
</evidence>
<evidence type="ECO:0000269" key="19">
    <source>
    </source>
</evidence>
<evidence type="ECO:0000269" key="20">
    <source>
    </source>
</evidence>
<evidence type="ECO:0000269" key="21">
    <source>
    </source>
</evidence>
<evidence type="ECO:0000269" key="22">
    <source>
    </source>
</evidence>
<evidence type="ECO:0000269" key="23">
    <source>
    </source>
</evidence>
<evidence type="ECO:0000269" key="24">
    <source>
    </source>
</evidence>
<evidence type="ECO:0000269" key="25">
    <source>
    </source>
</evidence>
<evidence type="ECO:0000305" key="26"/>
<evidence type="ECO:0007744" key="27">
    <source>
    </source>
</evidence>
<evidence type="ECO:0007744" key="28">
    <source>
    </source>
</evidence>
<evidence type="ECO:0007744" key="29">
    <source>
    </source>
</evidence>
<evidence type="ECO:0007744" key="30">
    <source>
    </source>
</evidence>
<evidence type="ECO:0007744" key="31">
    <source>
    </source>
</evidence>
<evidence type="ECO:0007744" key="32">
    <source>
    </source>
</evidence>
<evidence type="ECO:0007744" key="33">
    <source>
    </source>
</evidence>
<evidence type="ECO:0007744" key="34">
    <source>
    </source>
</evidence>
<evidence type="ECO:0007744" key="35">
    <source>
    </source>
</evidence>
<evidence type="ECO:0007744" key="36">
    <source>
    </source>
</evidence>
<evidence type="ECO:0007744" key="37">
    <source>
    </source>
</evidence>
<evidence type="ECO:0007744" key="38">
    <source>
    </source>
</evidence>
<evidence type="ECO:0007744" key="39">
    <source>
    </source>
</evidence>
<evidence type="ECO:0007829" key="40">
    <source>
        <dbReference type="PDB" id="5KJZ"/>
    </source>
</evidence>
<keyword id="KW-0002">3D-structure</keyword>
<keyword id="KW-0007">Acetylation</keyword>
<keyword id="KW-0025">Alternative splicing</keyword>
<keyword id="KW-0114">cAMP</keyword>
<keyword id="KW-0116">cAMP-binding</keyword>
<keyword id="KW-1003">Cell membrane</keyword>
<keyword id="KW-1062">Cushing syndrome</keyword>
<keyword id="KW-0903">Direct protein sequencing</keyword>
<keyword id="KW-0225">Disease variant</keyword>
<keyword id="KW-1015">Disulfide bond</keyword>
<keyword id="KW-0472">Membrane</keyword>
<keyword id="KW-0547">Nucleotide-binding</keyword>
<keyword id="KW-0597">Phosphoprotein</keyword>
<keyword id="KW-1267">Proteomics identification</keyword>
<keyword id="KW-1185">Reference proteome</keyword>
<keyword id="KW-0677">Repeat</keyword>
<name>KAP0_HUMAN</name>